<name>ODP2_STAEQ</name>
<evidence type="ECO:0000250" key="1"/>
<evidence type="ECO:0000255" key="2"/>
<evidence type="ECO:0000255" key="3">
    <source>
        <dbReference type="PROSITE-ProRule" id="PRU01066"/>
    </source>
</evidence>
<evidence type="ECO:0000255" key="4">
    <source>
        <dbReference type="PROSITE-ProRule" id="PRU01170"/>
    </source>
</evidence>
<evidence type="ECO:0000256" key="5">
    <source>
        <dbReference type="SAM" id="MobiDB-lite"/>
    </source>
</evidence>
<evidence type="ECO:0000305" key="6"/>
<sequence length="433" mass="46963">MAFEFRLPDIGEGIHEGEIVKWFIKAGDTIEEDDVLAEVQNDKSVVEIPSPVSGTVEEVLVDEGTVAVVGDVIVKIDAPDAEEMQFKGHGDDEDSKKEEKEQESPVQEEASSTQSQEKTEVDESKTVKAMPSVRKYARENGVNIKAVNGSGKNGRITKEDIDAYLNGGSSEEGSNTSAASESTSSDVVNASATQALPEGDFPETTEKIPAMRKAIAKAMVNSKHTAPHVTLMDEIDVQELWDHRKKFKEIAAEQGTKLTFLPYVVKALVSALKKYPALNTSFNEEAGEVVHKHYWNIGIAADTDKGLLVPVVKHADRKSIFEISDEINELAVKARDGKLTSEEMKGATCTISNIGSAGGQWFTPVINHPEVAILGIGRIAQKPIVKDGEIVAAPVLALSLSFDHRQIDGATGQNAMNHIKRLLNNPELLLMEG</sequence>
<organism>
    <name type="scientific">Staphylococcus epidermidis (strain ATCC 35984 / DSM 28319 / BCRC 17069 / CCUG 31568 / BM 3577 / RP62A)</name>
    <dbReference type="NCBI Taxonomy" id="176279"/>
    <lineage>
        <taxon>Bacteria</taxon>
        <taxon>Bacillati</taxon>
        <taxon>Bacillota</taxon>
        <taxon>Bacilli</taxon>
        <taxon>Bacillales</taxon>
        <taxon>Staphylococcaceae</taxon>
        <taxon>Staphylococcus</taxon>
    </lineage>
</organism>
<gene>
    <name type="primary">pdhC</name>
    <name type="ordered locus">SERP0682</name>
</gene>
<protein>
    <recommendedName>
        <fullName>Dihydrolipoyllysine-residue acetyltransferase component of pyruvate dehydrogenase complex</fullName>
        <ecNumber>2.3.1.12</ecNumber>
    </recommendedName>
    <alternativeName>
        <fullName>Dihydrolipoamide acetyltransferase component of pyruvate dehydrogenase complex</fullName>
    </alternativeName>
    <alternativeName>
        <fullName>E2</fullName>
    </alternativeName>
</protein>
<reference key="1">
    <citation type="journal article" date="2005" name="J. Bacteriol.">
        <title>Insights on evolution of virulence and resistance from the complete genome analysis of an early methicillin-resistant Staphylococcus aureus strain and a biofilm-producing methicillin-resistant Staphylococcus epidermidis strain.</title>
        <authorList>
            <person name="Gill S.R."/>
            <person name="Fouts D.E."/>
            <person name="Archer G.L."/>
            <person name="Mongodin E.F."/>
            <person name="DeBoy R.T."/>
            <person name="Ravel J."/>
            <person name="Paulsen I.T."/>
            <person name="Kolonay J.F."/>
            <person name="Brinkac L.M."/>
            <person name="Beanan M.J."/>
            <person name="Dodson R.J."/>
            <person name="Daugherty S.C."/>
            <person name="Madupu R."/>
            <person name="Angiuoli S.V."/>
            <person name="Durkin A.S."/>
            <person name="Haft D.H."/>
            <person name="Vamathevan J.J."/>
            <person name="Khouri H."/>
            <person name="Utterback T.R."/>
            <person name="Lee C."/>
            <person name="Dimitrov G."/>
            <person name="Jiang L."/>
            <person name="Qin H."/>
            <person name="Weidman J."/>
            <person name="Tran K."/>
            <person name="Kang K.H."/>
            <person name="Hance I.R."/>
            <person name="Nelson K.E."/>
            <person name="Fraser C.M."/>
        </authorList>
    </citation>
    <scope>NUCLEOTIDE SEQUENCE [LARGE SCALE GENOMIC DNA]</scope>
    <source>
        <strain>ATCC 35984 / DSM 28319 / BCRC 17069 / CCUG 31568 / BM 3577 / RP62A</strain>
    </source>
</reference>
<feature type="chain" id="PRO_0000162295" description="Dihydrolipoyllysine-residue acetyltransferase component of pyruvate dehydrogenase complex">
    <location>
        <begin position="1"/>
        <end position="433"/>
    </location>
</feature>
<feature type="domain" description="Lipoyl-binding" evidence="3">
    <location>
        <begin position="2"/>
        <end position="77"/>
    </location>
</feature>
<feature type="domain" description="Peripheral subunit-binding (PSBD)" evidence="4">
    <location>
        <begin position="128"/>
        <end position="165"/>
    </location>
</feature>
<feature type="region of interest" description="Disordered" evidence="5">
    <location>
        <begin position="80"/>
        <end position="134"/>
    </location>
</feature>
<feature type="region of interest" description="Disordered" evidence="5">
    <location>
        <begin position="164"/>
        <end position="204"/>
    </location>
</feature>
<feature type="compositionally biased region" description="Basic and acidic residues" evidence="5">
    <location>
        <begin position="84"/>
        <end position="103"/>
    </location>
</feature>
<feature type="compositionally biased region" description="Basic and acidic residues" evidence="5">
    <location>
        <begin position="117"/>
        <end position="126"/>
    </location>
</feature>
<feature type="compositionally biased region" description="Low complexity" evidence="5">
    <location>
        <begin position="166"/>
        <end position="185"/>
    </location>
</feature>
<feature type="active site" evidence="2">
    <location>
        <position position="404"/>
    </location>
</feature>
<feature type="modified residue" description="N6-lipoyllysine" evidence="1 3">
    <location>
        <position position="43"/>
    </location>
</feature>
<accession>Q5HQ74</accession>
<keyword id="KW-0012">Acyltransferase</keyword>
<keyword id="KW-0450">Lipoyl</keyword>
<keyword id="KW-1185">Reference proteome</keyword>
<keyword id="KW-0808">Transferase</keyword>
<dbReference type="EC" id="2.3.1.12"/>
<dbReference type="EMBL" id="CP000029">
    <property type="protein sequence ID" value="AAW54054.1"/>
    <property type="molecule type" value="Genomic_DNA"/>
</dbReference>
<dbReference type="RefSeq" id="WP_001831683.1">
    <property type="nucleotide sequence ID" value="NC_002976.3"/>
</dbReference>
<dbReference type="SMR" id="Q5HQ74"/>
<dbReference type="STRING" id="176279.SERP0682"/>
<dbReference type="KEGG" id="ser:SERP0682"/>
<dbReference type="eggNOG" id="COG0508">
    <property type="taxonomic scope" value="Bacteria"/>
</dbReference>
<dbReference type="HOGENOM" id="CLU_016733_10_0_9"/>
<dbReference type="Proteomes" id="UP000000531">
    <property type="component" value="Chromosome"/>
</dbReference>
<dbReference type="GO" id="GO:0005737">
    <property type="term" value="C:cytoplasm"/>
    <property type="evidence" value="ECO:0007669"/>
    <property type="project" value="TreeGrafter"/>
</dbReference>
<dbReference type="GO" id="GO:0004742">
    <property type="term" value="F:dihydrolipoyllysine-residue acetyltransferase activity"/>
    <property type="evidence" value="ECO:0007669"/>
    <property type="project" value="UniProtKB-EC"/>
</dbReference>
<dbReference type="GO" id="GO:0031405">
    <property type="term" value="F:lipoic acid binding"/>
    <property type="evidence" value="ECO:0007669"/>
    <property type="project" value="TreeGrafter"/>
</dbReference>
<dbReference type="CDD" id="cd06849">
    <property type="entry name" value="lipoyl_domain"/>
    <property type="match status" value="1"/>
</dbReference>
<dbReference type="FunFam" id="3.30.559.10:FF:000007">
    <property type="entry name" value="Dihydrolipoamide acetyltransferase component of pyruvate dehydrogenase complex"/>
    <property type="match status" value="1"/>
</dbReference>
<dbReference type="FunFam" id="4.10.320.10:FF:000011">
    <property type="entry name" value="Dihydrolipoamide acetyltransferase component of pyruvate dehydrogenase complex"/>
    <property type="match status" value="1"/>
</dbReference>
<dbReference type="Gene3D" id="2.40.50.100">
    <property type="match status" value="1"/>
</dbReference>
<dbReference type="Gene3D" id="3.30.559.10">
    <property type="entry name" value="Chloramphenicol acetyltransferase-like domain"/>
    <property type="match status" value="1"/>
</dbReference>
<dbReference type="Gene3D" id="4.10.320.10">
    <property type="entry name" value="E3-binding domain"/>
    <property type="match status" value="1"/>
</dbReference>
<dbReference type="InterPro" id="IPR003016">
    <property type="entry name" value="2-oxoA_DH_lipoyl-BS"/>
</dbReference>
<dbReference type="InterPro" id="IPR001078">
    <property type="entry name" value="2-oxoacid_DH_actylTfrase"/>
</dbReference>
<dbReference type="InterPro" id="IPR050743">
    <property type="entry name" value="2-oxoacid_DH_E2_comp"/>
</dbReference>
<dbReference type="InterPro" id="IPR000089">
    <property type="entry name" value="Biotin_lipoyl"/>
</dbReference>
<dbReference type="InterPro" id="IPR023213">
    <property type="entry name" value="CAT-like_dom_sf"/>
</dbReference>
<dbReference type="InterPro" id="IPR036625">
    <property type="entry name" value="E3-bd_dom_sf"/>
</dbReference>
<dbReference type="InterPro" id="IPR004167">
    <property type="entry name" value="PSBD"/>
</dbReference>
<dbReference type="InterPro" id="IPR011053">
    <property type="entry name" value="Single_hybrid_motif"/>
</dbReference>
<dbReference type="PANTHER" id="PTHR43178">
    <property type="entry name" value="DIHYDROLIPOAMIDE ACETYLTRANSFERASE COMPONENT OF PYRUVATE DEHYDROGENASE COMPLEX"/>
    <property type="match status" value="1"/>
</dbReference>
<dbReference type="PANTHER" id="PTHR43178:SF5">
    <property type="entry name" value="LIPOAMIDE ACYLTRANSFERASE COMPONENT OF BRANCHED-CHAIN ALPHA-KETO ACID DEHYDROGENASE COMPLEX, MITOCHONDRIAL"/>
    <property type="match status" value="1"/>
</dbReference>
<dbReference type="Pfam" id="PF00198">
    <property type="entry name" value="2-oxoacid_dh"/>
    <property type="match status" value="1"/>
</dbReference>
<dbReference type="Pfam" id="PF00364">
    <property type="entry name" value="Biotin_lipoyl"/>
    <property type="match status" value="1"/>
</dbReference>
<dbReference type="Pfam" id="PF02817">
    <property type="entry name" value="E3_binding"/>
    <property type="match status" value="1"/>
</dbReference>
<dbReference type="SUPFAM" id="SSF52777">
    <property type="entry name" value="CoA-dependent acyltransferases"/>
    <property type="match status" value="1"/>
</dbReference>
<dbReference type="SUPFAM" id="SSF47005">
    <property type="entry name" value="Peripheral subunit-binding domain of 2-oxo acid dehydrogenase complex"/>
    <property type="match status" value="1"/>
</dbReference>
<dbReference type="SUPFAM" id="SSF51230">
    <property type="entry name" value="Single hybrid motif"/>
    <property type="match status" value="1"/>
</dbReference>
<dbReference type="PROSITE" id="PS50968">
    <property type="entry name" value="BIOTINYL_LIPOYL"/>
    <property type="match status" value="1"/>
</dbReference>
<dbReference type="PROSITE" id="PS00189">
    <property type="entry name" value="LIPOYL"/>
    <property type="match status" value="1"/>
</dbReference>
<dbReference type="PROSITE" id="PS51826">
    <property type="entry name" value="PSBD"/>
    <property type="match status" value="1"/>
</dbReference>
<proteinExistence type="inferred from homology"/>
<comment type="function">
    <text>The pyruvate dehydrogenase complex catalyzes the overall conversion of pyruvate to acetyl-CoA and CO(2). It contains multiple copies of three enzymatic components: pyruvate dehydrogenase (E1), dihydrolipoamide acetyltransferase (E2) and lipoamide dehydrogenase (E3).</text>
</comment>
<comment type="catalytic activity">
    <reaction>
        <text>N(6)-[(R)-dihydrolipoyl]-L-lysyl-[protein] + acetyl-CoA = N(6)-[(R)-S(8)-acetyldihydrolipoyl]-L-lysyl-[protein] + CoA</text>
        <dbReference type="Rhea" id="RHEA:17017"/>
        <dbReference type="Rhea" id="RHEA-COMP:10475"/>
        <dbReference type="Rhea" id="RHEA-COMP:10478"/>
        <dbReference type="ChEBI" id="CHEBI:57287"/>
        <dbReference type="ChEBI" id="CHEBI:57288"/>
        <dbReference type="ChEBI" id="CHEBI:83100"/>
        <dbReference type="ChEBI" id="CHEBI:83111"/>
        <dbReference type="EC" id="2.3.1.12"/>
    </reaction>
</comment>
<comment type="cofactor">
    <cofactor evidence="1">
        <name>(R)-lipoate</name>
        <dbReference type="ChEBI" id="CHEBI:83088"/>
    </cofactor>
    <text evidence="1">Binds 1 lipoyl cofactor covalently.</text>
</comment>
<comment type="subunit">
    <text evidence="1">Forms a 24-polypeptide structural core with octahedral symmetry.</text>
</comment>
<comment type="similarity">
    <text evidence="6">Belongs to the 2-oxoacid dehydrogenase family.</text>
</comment>